<proteinExistence type="inferred from homology"/>
<feature type="chain" id="PRO_1000018215" description="Tryptophan synthase alpha chain">
    <location>
        <begin position="1"/>
        <end position="262"/>
    </location>
</feature>
<feature type="active site" description="Proton acceptor" evidence="1">
    <location>
        <position position="48"/>
    </location>
</feature>
<feature type="active site" description="Proton acceptor" evidence="1">
    <location>
        <position position="59"/>
    </location>
</feature>
<accession>Q1CRX0</accession>
<gene>
    <name evidence="1" type="primary">trpA</name>
    <name type="ordered locus">HPAG1_1235</name>
</gene>
<protein>
    <recommendedName>
        <fullName evidence="1">Tryptophan synthase alpha chain</fullName>
        <ecNumber evidence="1">4.2.1.20</ecNumber>
    </recommendedName>
</protein>
<sequence>MRYQNMFETLKKQDKMAFIPFVTLGDPNYEWSFEIIKTLIDSGVSALELGFAFSDPVADGVTIQASHLRALKHASMAKNFQLLRALRDYNPHIPIGLLAYANLIFSYGVDGFYAQIKECGVDSVLIADMPLIEKELVIKSAQKHQIKQIFIASPNASVKDLEQVATHSQGYIYTLARSGVTGASHTLKNDASAIIKTLKTFSSTPALLGFGISKKEHITNAKGMGADGVICGSALVKIIEENLNNENAMLEKIKGFIGGMIF</sequence>
<evidence type="ECO:0000255" key="1">
    <source>
        <dbReference type="HAMAP-Rule" id="MF_00131"/>
    </source>
</evidence>
<reference key="1">
    <citation type="journal article" date="2006" name="Proc. Natl. Acad. Sci. U.S.A.">
        <title>The complete genome sequence of a chronic atrophic gastritis Helicobacter pylori strain: evolution during disease progression.</title>
        <authorList>
            <person name="Oh J.D."/>
            <person name="Kling-Baeckhed H."/>
            <person name="Giannakis M."/>
            <person name="Xu J."/>
            <person name="Fulton R.S."/>
            <person name="Fulton L.A."/>
            <person name="Cordum H.S."/>
            <person name="Wang C."/>
            <person name="Elliott G."/>
            <person name="Edwards J."/>
            <person name="Mardis E.R."/>
            <person name="Engstrand L.G."/>
            <person name="Gordon J.I."/>
        </authorList>
    </citation>
    <scope>NUCLEOTIDE SEQUENCE [LARGE SCALE GENOMIC DNA]</scope>
    <source>
        <strain>HPAG1</strain>
    </source>
</reference>
<keyword id="KW-0028">Amino-acid biosynthesis</keyword>
<keyword id="KW-0057">Aromatic amino acid biosynthesis</keyword>
<keyword id="KW-0456">Lyase</keyword>
<keyword id="KW-0822">Tryptophan biosynthesis</keyword>
<name>TRPA_HELPH</name>
<comment type="function">
    <text evidence="1">The alpha subunit is responsible for the aldol cleavage of indoleglycerol phosphate to indole and glyceraldehyde 3-phosphate.</text>
</comment>
<comment type="catalytic activity">
    <reaction evidence="1">
        <text>(1S,2R)-1-C-(indol-3-yl)glycerol 3-phosphate + L-serine = D-glyceraldehyde 3-phosphate + L-tryptophan + H2O</text>
        <dbReference type="Rhea" id="RHEA:10532"/>
        <dbReference type="ChEBI" id="CHEBI:15377"/>
        <dbReference type="ChEBI" id="CHEBI:33384"/>
        <dbReference type="ChEBI" id="CHEBI:57912"/>
        <dbReference type="ChEBI" id="CHEBI:58866"/>
        <dbReference type="ChEBI" id="CHEBI:59776"/>
        <dbReference type="EC" id="4.2.1.20"/>
    </reaction>
</comment>
<comment type="pathway">
    <text evidence="1">Amino-acid biosynthesis; L-tryptophan biosynthesis; L-tryptophan from chorismate: step 5/5.</text>
</comment>
<comment type="subunit">
    <text evidence="1">Tetramer of two alpha and two beta chains.</text>
</comment>
<comment type="similarity">
    <text evidence="1">Belongs to the TrpA family.</text>
</comment>
<organism>
    <name type="scientific">Helicobacter pylori (strain HPAG1)</name>
    <dbReference type="NCBI Taxonomy" id="357544"/>
    <lineage>
        <taxon>Bacteria</taxon>
        <taxon>Pseudomonadati</taxon>
        <taxon>Campylobacterota</taxon>
        <taxon>Epsilonproteobacteria</taxon>
        <taxon>Campylobacterales</taxon>
        <taxon>Helicobacteraceae</taxon>
        <taxon>Helicobacter</taxon>
    </lineage>
</organism>
<dbReference type="EC" id="4.2.1.20" evidence="1"/>
<dbReference type="EMBL" id="CP000241">
    <property type="protein sequence ID" value="ABF85302.1"/>
    <property type="molecule type" value="Genomic_DNA"/>
</dbReference>
<dbReference type="RefSeq" id="WP_001270380.1">
    <property type="nucleotide sequence ID" value="NC_008086.1"/>
</dbReference>
<dbReference type="SMR" id="Q1CRX0"/>
<dbReference type="KEGG" id="hpa:HPAG1_1235"/>
<dbReference type="HOGENOM" id="CLU_016734_0_4_7"/>
<dbReference type="UniPathway" id="UPA00035">
    <property type="reaction ID" value="UER00044"/>
</dbReference>
<dbReference type="GO" id="GO:0005829">
    <property type="term" value="C:cytosol"/>
    <property type="evidence" value="ECO:0007669"/>
    <property type="project" value="TreeGrafter"/>
</dbReference>
<dbReference type="GO" id="GO:0004834">
    <property type="term" value="F:tryptophan synthase activity"/>
    <property type="evidence" value="ECO:0007669"/>
    <property type="project" value="UniProtKB-UniRule"/>
</dbReference>
<dbReference type="CDD" id="cd04724">
    <property type="entry name" value="Tryptophan_synthase_alpha"/>
    <property type="match status" value="1"/>
</dbReference>
<dbReference type="FunFam" id="3.20.20.70:FF:000037">
    <property type="entry name" value="Tryptophan synthase alpha chain"/>
    <property type="match status" value="1"/>
</dbReference>
<dbReference type="Gene3D" id="3.20.20.70">
    <property type="entry name" value="Aldolase class I"/>
    <property type="match status" value="1"/>
</dbReference>
<dbReference type="HAMAP" id="MF_00131">
    <property type="entry name" value="Trp_synth_alpha"/>
    <property type="match status" value="1"/>
</dbReference>
<dbReference type="InterPro" id="IPR013785">
    <property type="entry name" value="Aldolase_TIM"/>
</dbReference>
<dbReference type="InterPro" id="IPR011060">
    <property type="entry name" value="RibuloseP-bd_barrel"/>
</dbReference>
<dbReference type="InterPro" id="IPR018204">
    <property type="entry name" value="Trp_synthase_alpha_AS"/>
</dbReference>
<dbReference type="InterPro" id="IPR002028">
    <property type="entry name" value="Trp_synthase_suA"/>
</dbReference>
<dbReference type="NCBIfam" id="TIGR00262">
    <property type="entry name" value="trpA"/>
    <property type="match status" value="1"/>
</dbReference>
<dbReference type="PANTHER" id="PTHR43406:SF1">
    <property type="entry name" value="TRYPTOPHAN SYNTHASE ALPHA CHAIN, CHLOROPLASTIC"/>
    <property type="match status" value="1"/>
</dbReference>
<dbReference type="PANTHER" id="PTHR43406">
    <property type="entry name" value="TRYPTOPHAN SYNTHASE, ALPHA CHAIN"/>
    <property type="match status" value="1"/>
</dbReference>
<dbReference type="Pfam" id="PF00290">
    <property type="entry name" value="Trp_syntA"/>
    <property type="match status" value="1"/>
</dbReference>
<dbReference type="SUPFAM" id="SSF51366">
    <property type="entry name" value="Ribulose-phoshate binding barrel"/>
    <property type="match status" value="1"/>
</dbReference>
<dbReference type="PROSITE" id="PS00167">
    <property type="entry name" value="TRP_SYNTHASE_ALPHA"/>
    <property type="match status" value="1"/>
</dbReference>